<keyword id="KW-0167">Capsid protein</keyword>
<keyword id="KW-1035">Host cytoplasm</keyword>
<keyword id="KW-1185">Reference proteome</keyword>
<keyword id="KW-0694">RNA-binding</keyword>
<keyword id="KW-0946">Virion</keyword>
<protein>
    <recommendedName>
        <fullName>Protein P7</fullName>
    </recommendedName>
</protein>
<organism>
    <name type="scientific">Rice gall dwarf virus</name>
    <name type="common">RGDV</name>
    <dbReference type="NCBI Taxonomy" id="10986"/>
    <lineage>
        <taxon>Viruses</taxon>
        <taxon>Riboviria</taxon>
        <taxon>Orthornavirae</taxon>
        <taxon>Duplornaviricota</taxon>
        <taxon>Resentoviricetes</taxon>
        <taxon>Reovirales</taxon>
        <taxon>Sedoreoviridae</taxon>
        <taxon>Phytoreovirus</taxon>
    </lineage>
</organism>
<comment type="function">
    <text evidence="1">Probable component of the transcriptional machinery present in the inner capsid. Displays dsRNA binding activity and may play an important role in the sorting of viral RNA and virion assembly. Together with the RNA-directed RNA polymerase P1 and capping enzyme P5, forms an transcriptional complex positioned near the channels situated at each of the five-fold vertices of the core (By similarity).</text>
</comment>
<comment type="subcellular location">
    <subcellularLocation>
        <location evidence="1">Virion</location>
    </subcellularLocation>
    <subcellularLocation>
        <location evidence="1">Host cytoplasm</location>
    </subcellularLocation>
    <text evidence="1">Located inside the inner capsid. Found in the interior of spherical cytoplasmic structures, called virus factories, that appear early after infection and are the site of viral replication and packaging.</text>
</comment>
<comment type="similarity">
    <text evidence="2">Belongs to the phytoreovirus protein P7 family.</text>
</comment>
<proteinExistence type="inferred from homology"/>
<name>P7_RGDV</name>
<reference key="1">
    <citation type="journal article" date="2007" name="Arch. Virol.">
        <title>Molecular analysis of the genome segments S1, S4, S6, S7 and S12 of a Rice gall dwarf virus isolate from Thailand; completion of the genomic sequence.</title>
        <authorList>
            <person name="Moriyasu Y."/>
            <person name="Maruyama-Funatsuki W."/>
            <person name="Kikuchi A."/>
            <person name="Ichimi K."/>
            <person name="Zhong B."/>
            <person name="Yan J."/>
            <person name="Zhu Y."/>
            <person name="Suga H."/>
            <person name="Watanabe Y."/>
            <person name="Ichiki-Uehara T."/>
            <person name="Shimizu T."/>
            <person name="Hagiwara K."/>
            <person name="Kamiunten H."/>
            <person name="Akutsu K."/>
            <person name="Omura T."/>
        </authorList>
    </citation>
    <scope>NUCLEOTIDE SEQUENCE [GENOMIC RNA]</scope>
</reference>
<feature type="chain" id="PRO_0000402406" description="Protein P7">
    <location>
        <begin position="1"/>
        <end position="489"/>
    </location>
</feature>
<feature type="region of interest" description="RNA-binding" evidence="1">
    <location>
        <begin position="129"/>
        <end position="251"/>
    </location>
</feature>
<feature type="region of interest" description="RNA-binding" evidence="1">
    <location>
        <begin position="321"/>
        <end position="351"/>
    </location>
</feature>
<dbReference type="EMBL" id="AB254453">
    <property type="protein sequence ID" value="BAF49641.1"/>
    <property type="molecule type" value="Genomic_RNA"/>
</dbReference>
<dbReference type="RefSeq" id="YP_001111375.1">
    <property type="nucleotide sequence ID" value="NC_009250.1"/>
</dbReference>
<dbReference type="GeneID" id="4955113"/>
<dbReference type="KEGG" id="vg:4955113"/>
<dbReference type="OrthoDB" id="13347at10239"/>
<dbReference type="Proteomes" id="UP000006720">
    <property type="component" value="Genome"/>
</dbReference>
<dbReference type="GO" id="GO:0030430">
    <property type="term" value="C:host cell cytoplasm"/>
    <property type="evidence" value="ECO:0007669"/>
    <property type="project" value="UniProtKB-SubCell"/>
</dbReference>
<dbReference type="GO" id="GO:0019028">
    <property type="term" value="C:viral capsid"/>
    <property type="evidence" value="ECO:0007669"/>
    <property type="project" value="UniProtKB-KW"/>
</dbReference>
<dbReference type="GO" id="GO:0003723">
    <property type="term" value="F:RNA binding"/>
    <property type="evidence" value="ECO:0007669"/>
    <property type="project" value="UniProtKB-KW"/>
</dbReference>
<dbReference type="InterPro" id="IPR009873">
    <property type="entry name" value="Phytoreo_S7"/>
</dbReference>
<dbReference type="Pfam" id="PF07236">
    <property type="entry name" value="Phytoreo_S7"/>
    <property type="match status" value="1"/>
</dbReference>
<accession>A4PBP8</accession>
<sequence length="489" mass="53305">MTAIVCVSLLSEKAVLVKNLTDHVKAFYESIIGRFVSGPDTITEKRTMDSVIARKIVPSSTVILDGYGESFIRENPNATLMDIVTSSNNTAPKTTYQSIMPAMSALLGVPYVQGAFRHGIISKHGGKKTSLIILVVAPPSGFIRAASVGSSSSVVEVDSNATIKLDDTVGINSAMIKNTKLVSAAGLTAMGIEEIPIKCNSLDSLIIGWSMKYFKGYVDGYKSGVRDQATTILLNTPFKDLFVENGAGRMLPNDSFRVSESTIKNQVIEMGEGTKPDALISTHGDVFIDSEAVFTSDEQEKYRKDKDEEFFKKCVCNHIIAGDYGNNVIIIENPPHSDVRGLGVKYSFQVNKPELDGTESNGIKYYSKDTPQQIHDAILDVISDTNKSLLMNSKPIERTGKEAIAVCFKNGFPKKFAMVEMEKNGVKIVGMGDSPMLVLDNYPSMLSRAEKANRKSSRAKIDAPVVKIDTEDLDTNTLLDVIKKEVGSR</sequence>
<organismHost>
    <name type="scientific">Nephotettix cincticeps</name>
    <name type="common">Green rice leafhopper</name>
    <name type="synonym">Selenocephalus cincticeps</name>
    <dbReference type="NCBI Taxonomy" id="94400"/>
</organismHost>
<organismHost>
    <name type="scientific">Oryza sativa</name>
    <name type="common">Rice</name>
    <dbReference type="NCBI Taxonomy" id="4530"/>
</organismHost>
<evidence type="ECO:0000250" key="1"/>
<evidence type="ECO:0000305" key="2"/>